<reference key="1">
    <citation type="submission" date="1998-11" db="EMBL/GenBank/DDBJ databases">
        <authorList>
            <person name="Kitagawa H."/>
        </authorList>
    </citation>
    <scope>NUCLEOTIDE SEQUENCE [GENOMIC DNA]</scope>
    <scope>ALTERNATIVE SPLICING</scope>
    <source>
        <strain>Asyoro</strain>
    </source>
</reference>
<evidence type="ECO:0000250" key="1"/>
<evidence type="ECO:0000305" key="2"/>
<keyword id="KW-0025">Alternative splicing</keyword>
<keyword id="KW-0963">Cytoplasm</keyword>
<keyword id="KW-0520">NAD</keyword>
<keyword id="KW-0560">Oxidoreductase</keyword>
<gene>
    <name type="primary">Gpdh1</name>
</gene>
<gene>
    <name type="primary">Gpdh2</name>
</gene>
<proteinExistence type="inferred from homology"/>
<accession>O97463</accession>
<accession>Q9TVF9</accession>
<accession>Q9TVK5</accession>
<organism>
    <name type="scientific">Drosophila kanekoi</name>
    <name type="common">Fruit fly</name>
    <dbReference type="NCBI Taxonomy" id="50033"/>
    <lineage>
        <taxon>Eukaryota</taxon>
        <taxon>Metazoa</taxon>
        <taxon>Ecdysozoa</taxon>
        <taxon>Arthropoda</taxon>
        <taxon>Hexapoda</taxon>
        <taxon>Insecta</taxon>
        <taxon>Pterygota</taxon>
        <taxon>Neoptera</taxon>
        <taxon>Endopterygota</taxon>
        <taxon>Diptera</taxon>
        <taxon>Brachycera</taxon>
        <taxon>Muscomorpha</taxon>
        <taxon>Ephydroidea</taxon>
        <taxon>Drosophilidae</taxon>
        <taxon>Drosophila</taxon>
    </lineage>
</organism>
<protein>
    <recommendedName>
        <fullName>Glycerol-3-phosphate dehydrogenase [NAD(+)], cytoplasmic</fullName>
        <shortName>GPD-C</shortName>
        <shortName>GPDH-C</shortName>
        <ecNumber>1.1.1.8</ecNumber>
    </recommendedName>
</protein>
<feature type="initiator methionine" description="Removed" evidence="1">
    <location>
        <position position="1"/>
    </location>
</feature>
<feature type="chain" id="PRO_0000138074" description="Glycerol-3-phosphate dehydrogenase [NAD(+)], cytoplasmic">
    <location>
        <begin position="2"/>
        <end position="360"/>
    </location>
</feature>
<feature type="active site" description="Proton acceptor" evidence="1">
    <location>
        <position position="206"/>
    </location>
</feature>
<feature type="binding site" evidence="1">
    <location>
        <begin position="11"/>
        <end position="16"/>
    </location>
    <ligand>
        <name>NAD(+)</name>
        <dbReference type="ChEBI" id="CHEBI:57540"/>
    </ligand>
</feature>
<feature type="binding site" evidence="1">
    <location>
        <position position="98"/>
    </location>
    <ligand>
        <name>NAD(+)</name>
        <dbReference type="ChEBI" id="CHEBI:57540"/>
    </ligand>
</feature>
<feature type="binding site" evidence="1">
    <location>
        <position position="121"/>
    </location>
    <ligand>
        <name>NAD(+)</name>
        <dbReference type="ChEBI" id="CHEBI:57540"/>
    </ligand>
</feature>
<feature type="binding site" evidence="1">
    <location>
        <position position="121"/>
    </location>
    <ligand>
        <name>substrate</name>
    </ligand>
</feature>
<feature type="binding site" evidence="1">
    <location>
        <position position="155"/>
    </location>
    <ligand>
        <name>NAD(+)</name>
        <dbReference type="ChEBI" id="CHEBI:57540"/>
    </ligand>
</feature>
<feature type="binding site" evidence="1">
    <location>
        <begin position="270"/>
        <end position="271"/>
    </location>
    <ligand>
        <name>substrate</name>
    </ligand>
</feature>
<feature type="binding site" evidence="1">
    <location>
        <position position="270"/>
    </location>
    <ligand>
        <name>NAD(+)</name>
        <dbReference type="ChEBI" id="CHEBI:57540"/>
    </ligand>
</feature>
<feature type="binding site" evidence="1">
    <location>
        <position position="299"/>
    </location>
    <ligand>
        <name>NAD(+)</name>
        <dbReference type="ChEBI" id="CHEBI:57540"/>
    </ligand>
</feature>
<feature type="splice variant" id="VSP_001587" description="In isoform 2." evidence="2">
    <original>DTFIMPSPKL</original>
    <variation>QTL</variation>
    <location>
        <begin position="351"/>
        <end position="360"/>
    </location>
</feature>
<feature type="splice variant" id="VSP_001588" description="In isoform 3." evidence="2">
    <location>
        <begin position="351"/>
        <end position="360"/>
    </location>
</feature>
<name>GPDA_DROKA</name>
<comment type="catalytic activity">
    <reaction>
        <text>sn-glycerol 3-phosphate + NAD(+) = dihydroxyacetone phosphate + NADH + H(+)</text>
        <dbReference type="Rhea" id="RHEA:11092"/>
        <dbReference type="ChEBI" id="CHEBI:15378"/>
        <dbReference type="ChEBI" id="CHEBI:57540"/>
        <dbReference type="ChEBI" id="CHEBI:57597"/>
        <dbReference type="ChEBI" id="CHEBI:57642"/>
        <dbReference type="ChEBI" id="CHEBI:57945"/>
        <dbReference type="EC" id="1.1.1.8"/>
    </reaction>
</comment>
<comment type="pathway">
    <text>Phospholipid metabolism; alpha-glycerophosphate cycle.</text>
</comment>
<comment type="subunit">
    <text evidence="1">Homodimer.</text>
</comment>
<comment type="subcellular location">
    <subcellularLocation>
        <location evidence="1">Cytoplasm</location>
    </subcellularLocation>
</comment>
<comment type="alternative products">
    <event type="alternative splicing"/>
    <isoform>
        <id>O97463-1</id>
        <name>1</name>
        <sequence type="displayed"/>
    </isoform>
    <isoform>
        <id>O97463-2</id>
        <name>2</name>
        <sequence type="described" ref="VSP_001587"/>
    </isoform>
    <isoform>
        <id>O97463-3</id>
        <name>3</name>
        <sequence type="described" ref="VSP_001588"/>
    </isoform>
</comment>
<comment type="similarity">
    <text evidence="2">Belongs to the NAD-dependent glycerol-3-phosphate dehydrogenase family.</text>
</comment>
<sequence length="360" mass="39465">MAEKVNVCIVGSGNWGSAIAKIVGANAAALPEFEERVTMFVYEEMIDGKKLTEIINETHENVKYLKGHKLPTNVVAVPDLVEAAKNADILIFVVPHQFIPNFCKQLLGKIKPNAIAISLIKGFDKAEGGGIDLISHIITRHLKIPCAVLMGANLANEVAEGNFCETTIGCTDKKYGKVLRDLFQANHFRVVVVEDADAVEVCGALKNIVACGAGFVDGLKLGDNTKAAVIRLGLMEMIRFVDVFYPGSKLSTFFESCGVADLITTCYGGRNRRVSEAFVTSGKTIEELEKEMLNGQKLQGPPTAEEVNYMLKNKGLEDKFPLFTAIHKICINQLKPKDLIDCIRNHPEHMDTFIMPSPKL</sequence>
<dbReference type="EC" id="1.1.1.8"/>
<dbReference type="EMBL" id="AB019506">
    <property type="protein sequence ID" value="BAA34356.1"/>
    <property type="molecule type" value="Genomic_DNA"/>
</dbReference>
<dbReference type="EMBL" id="AB019506">
    <property type="protein sequence ID" value="BAA34357.1"/>
    <property type="molecule type" value="Genomic_DNA"/>
</dbReference>
<dbReference type="EMBL" id="AB019506">
    <property type="protein sequence ID" value="BAA34358.1"/>
    <property type="molecule type" value="Genomic_DNA"/>
</dbReference>
<dbReference type="EMBL" id="AB019507">
    <property type="protein sequence ID" value="BAA34359.1"/>
    <property type="molecule type" value="Genomic_DNA"/>
</dbReference>
<dbReference type="EMBL" id="AB019507">
    <property type="protein sequence ID" value="BAA34360.1"/>
    <property type="molecule type" value="Genomic_DNA"/>
</dbReference>
<dbReference type="EMBL" id="AB019507">
    <property type="protein sequence ID" value="BAA34361.1"/>
    <property type="molecule type" value="Genomic_DNA"/>
</dbReference>
<dbReference type="SMR" id="O97463"/>
<dbReference type="UniPathway" id="UPA00086"/>
<dbReference type="GO" id="GO:0005829">
    <property type="term" value="C:cytosol"/>
    <property type="evidence" value="ECO:0007669"/>
    <property type="project" value="TreeGrafter"/>
</dbReference>
<dbReference type="GO" id="GO:0141152">
    <property type="term" value="F:glycerol-3-phosphate dehydrogenase (NAD+) activity"/>
    <property type="evidence" value="ECO:0007669"/>
    <property type="project" value="UniProtKB-EC"/>
</dbReference>
<dbReference type="GO" id="GO:0051287">
    <property type="term" value="F:NAD binding"/>
    <property type="evidence" value="ECO:0007669"/>
    <property type="project" value="InterPro"/>
</dbReference>
<dbReference type="GO" id="GO:0042803">
    <property type="term" value="F:protein homodimerization activity"/>
    <property type="evidence" value="ECO:0007669"/>
    <property type="project" value="InterPro"/>
</dbReference>
<dbReference type="GO" id="GO:0005975">
    <property type="term" value="P:carbohydrate metabolic process"/>
    <property type="evidence" value="ECO:0007669"/>
    <property type="project" value="InterPro"/>
</dbReference>
<dbReference type="GO" id="GO:0046168">
    <property type="term" value="P:glycerol-3-phosphate catabolic process"/>
    <property type="evidence" value="ECO:0007669"/>
    <property type="project" value="InterPro"/>
</dbReference>
<dbReference type="GO" id="GO:0006650">
    <property type="term" value="P:glycerophospholipid metabolic process"/>
    <property type="evidence" value="ECO:0007669"/>
    <property type="project" value="UniProtKB-UniPathway"/>
</dbReference>
<dbReference type="FunFam" id="1.10.1040.10:FF:000004">
    <property type="entry name" value="Glycerol-3-phosphate dehydrogenase [NAD(+)]"/>
    <property type="match status" value="1"/>
</dbReference>
<dbReference type="FunFam" id="3.40.50.720:FF:000088">
    <property type="entry name" value="Glycerol-3-phosphate dehydrogenase [NAD(+)]"/>
    <property type="match status" value="1"/>
</dbReference>
<dbReference type="Gene3D" id="1.10.1040.10">
    <property type="entry name" value="N-(1-d-carboxylethyl)-l-norvaline Dehydrogenase, domain 2"/>
    <property type="match status" value="1"/>
</dbReference>
<dbReference type="Gene3D" id="3.40.50.720">
    <property type="entry name" value="NAD(P)-binding Rossmann-like Domain"/>
    <property type="match status" value="1"/>
</dbReference>
<dbReference type="InterPro" id="IPR008927">
    <property type="entry name" value="6-PGluconate_DH-like_C_sf"/>
</dbReference>
<dbReference type="InterPro" id="IPR013328">
    <property type="entry name" value="6PGD_dom2"/>
</dbReference>
<dbReference type="InterPro" id="IPR006168">
    <property type="entry name" value="G3P_DH_NAD-dep"/>
</dbReference>
<dbReference type="InterPro" id="IPR006109">
    <property type="entry name" value="G3P_DH_NAD-dep_C"/>
</dbReference>
<dbReference type="InterPro" id="IPR017751">
    <property type="entry name" value="G3P_DH_NAD-dep_euk"/>
</dbReference>
<dbReference type="InterPro" id="IPR011128">
    <property type="entry name" value="G3P_DH_NAD-dep_N"/>
</dbReference>
<dbReference type="InterPro" id="IPR036291">
    <property type="entry name" value="NAD(P)-bd_dom_sf"/>
</dbReference>
<dbReference type="NCBIfam" id="TIGR03376">
    <property type="entry name" value="glycerol3P_DH"/>
    <property type="match status" value="1"/>
</dbReference>
<dbReference type="PANTHER" id="PTHR11728">
    <property type="entry name" value="GLYCEROL-3-PHOSPHATE DEHYDROGENASE"/>
    <property type="match status" value="1"/>
</dbReference>
<dbReference type="PANTHER" id="PTHR11728:SF8">
    <property type="entry name" value="GLYCEROL-3-PHOSPHATE DEHYDROGENASE [NAD(+)]-RELATED"/>
    <property type="match status" value="1"/>
</dbReference>
<dbReference type="Pfam" id="PF07479">
    <property type="entry name" value="NAD_Gly3P_dh_C"/>
    <property type="match status" value="1"/>
</dbReference>
<dbReference type="Pfam" id="PF01210">
    <property type="entry name" value="NAD_Gly3P_dh_N"/>
    <property type="match status" value="1"/>
</dbReference>
<dbReference type="PIRSF" id="PIRSF000114">
    <property type="entry name" value="Glycerol-3-P_dh"/>
    <property type="match status" value="1"/>
</dbReference>
<dbReference type="PRINTS" id="PR00077">
    <property type="entry name" value="GPDHDRGNASE"/>
</dbReference>
<dbReference type="SUPFAM" id="SSF48179">
    <property type="entry name" value="6-phosphogluconate dehydrogenase C-terminal domain-like"/>
    <property type="match status" value="1"/>
</dbReference>
<dbReference type="SUPFAM" id="SSF51735">
    <property type="entry name" value="NAD(P)-binding Rossmann-fold domains"/>
    <property type="match status" value="1"/>
</dbReference>
<dbReference type="PROSITE" id="PS00957">
    <property type="entry name" value="NAD_G3PDH"/>
    <property type="match status" value="1"/>
</dbReference>